<organism>
    <name type="scientific">Human parvovirus B19 (strain HV)</name>
    <name type="common">HPV B19</name>
    <dbReference type="NCBI Taxonomy" id="648237"/>
    <lineage>
        <taxon>Viruses</taxon>
        <taxon>Monodnaviria</taxon>
        <taxon>Shotokuvirae</taxon>
        <taxon>Cossaviricota</taxon>
        <taxon>Quintoviricetes</taxon>
        <taxon>Piccovirales</taxon>
        <taxon>Parvoviridae</taxon>
        <taxon>Parvovirinae</taxon>
        <taxon>Erythroparvovirus</taxon>
        <taxon>Erythroparvovirus primate1</taxon>
    </lineage>
</organism>
<name>11K_PAVHV</name>
<protein>
    <recommendedName>
        <fullName>Host-modulation protein 11K</fullName>
    </recommendedName>
    <alternativeName>
        <fullName>Host-modulation protein of 11 kDa</fullName>
    </alternativeName>
</protein>
<comment type="function">
    <text evidence="2 3 4 5">Enhances viral DNA replication and virion release (PubMed:29437973). Mechansitically, optimizes viral DNA replication by interacting with host GRB2 to inhibit the negative effect of ERK signaling on B19 viral replication (PubMed:30282717). Plays a role in viral infectivity (PubMed:16731932). Induces apoptosis of primary erythroid progenitor cells (PubMed:19861680).</text>
</comment>
<comment type="subunit">
    <text evidence="1 5">Interacts with host GRB2; this interaction alters host cell environment by modulating host signaling pathways.</text>
</comment>
<comment type="subcellular location">
    <subcellularLocation>
        <location evidence="3 5">Host cytoplasm</location>
    </subcellularLocation>
</comment>
<comment type="induction">
    <text evidence="4">Its expression is regulated by host RBM38, probably via RBM38-dependent splicing of the viral pre-mRNA.</text>
</comment>
<feature type="chain" id="PRO_0000428717" description="Host-modulation protein 11K">
    <location>
        <begin position="1"/>
        <end position="94"/>
    </location>
</feature>
<organismHost>
    <name type="scientific">Homo sapiens</name>
    <name type="common">Human</name>
    <dbReference type="NCBI Taxonomy" id="9606"/>
</organismHost>
<reference key="1">
    <citation type="submission" date="1999-06" db="EMBL/GenBank/DDBJ databases">
        <title>B19 genome sequence and structure analysis.</title>
        <authorList>
            <person name="Gallinella G."/>
            <person name="Venturoli S."/>
        </authorList>
    </citation>
    <scope>NUCLEOTIDE SEQUENCE [GENOMIC DNA]</scope>
</reference>
<reference key="2">
    <citation type="journal article" date="2001" name="Virology">
        <title>The small 11-kDa protein from B19 parvovirus binds growth factor receptor-binding protein 2 in vitro in a Src homology 3 domain/ligand-dependent manner.</title>
        <authorList>
            <person name="Fan M.M."/>
            <person name="Tamburic L."/>
            <person name="Shippam-Brett C."/>
            <person name="Zagrodney D.B."/>
            <person name="Astell C.R."/>
        </authorList>
    </citation>
    <scope>INTERACTION WITH HOST GRB2</scope>
</reference>
<reference key="3">
    <citation type="journal article" date="2006" name="J. Virol.">
        <title>Molecular and functional analyses of a human parvovirus B19 infectious clone demonstrates essential roles for NS1, VP1, and the 11-kilodalton protein in virus replication and infectivity.</title>
        <authorList>
            <person name="Zhi N."/>
            <person name="Mills I.P."/>
            <person name="Lu J."/>
            <person name="Wong S."/>
            <person name="Filippone C."/>
            <person name="Brown K.E."/>
        </authorList>
    </citation>
    <scope>FUNCTION</scope>
</reference>
<reference key="4">
    <citation type="journal article" date="2010" name="Blood">
        <title>The small 11 kDa nonstructural protein of human parvovirus B19 plays a key role in inducing apoptosis during B19 virus infection of primary erythroid progenitor cells.</title>
        <authorList>
            <person name="Chen A.Y."/>
            <person name="Zhang E.Y."/>
            <person name="Guan W."/>
            <person name="Cheng F."/>
            <person name="Kleiboeker S."/>
            <person name="Yankee T.M."/>
            <person name="Qiu J."/>
        </authorList>
    </citation>
    <scope>FUNCTION</scope>
    <scope>SUBCELLULAR LOCATION</scope>
</reference>
<reference key="5">
    <citation type="journal article" date="2018" name="J. Virol.">
        <title>RNA binding protein RBM38 regulates expression of the 11-Kilodalton protein of Parvovirus B19, which facilitates viral DNA replication.</title>
        <authorList>
            <person name="Ganaie S.S."/>
            <person name="Chen A.Y."/>
            <person name="Huang C."/>
            <person name="Xu P."/>
            <person name="Kleiboeker S."/>
            <person name="Du A."/>
            <person name="Qiu J."/>
        </authorList>
    </citation>
    <scope>FUNCTION</scope>
    <scope>INDUCTION</scope>
</reference>
<reference key="6">
    <citation type="journal article" date="2019" name="J. Virol.">
        <title>The 11-Kilodalton Nonstructural Protein of Human Parvovirus B19 Facilitates Viral DNA Replication by Interacting with Grb2 through Its Proline-Rich Motifs.</title>
        <authorList>
            <person name="Xu P."/>
            <person name="Chen A.Y."/>
            <person name="Ganaie S.S."/>
            <person name="Cheng F."/>
            <person name="Shen W."/>
            <person name="Wang X."/>
            <person name="Kleiboeker S."/>
            <person name="Li Y."/>
            <person name="Qiu J."/>
        </authorList>
    </citation>
    <scope>FUNCTION</scope>
    <scope>INTERACTION WITH HOST GRB2 (MICROBIAL INFECTION)</scope>
    <scope>SUBCELLULAR LOCATION</scope>
</reference>
<evidence type="ECO:0000269" key="1">
    <source>
    </source>
</evidence>
<evidence type="ECO:0000269" key="2">
    <source>
    </source>
</evidence>
<evidence type="ECO:0000269" key="3">
    <source>
    </source>
</evidence>
<evidence type="ECO:0000269" key="4">
    <source>
    </source>
</evidence>
<evidence type="ECO:0000269" key="5">
    <source>
    </source>
</evidence>
<gene>
    <name type="primary">11K</name>
</gene>
<sequence length="94" mass="10846">MQNNTTGMDTKSLKNCGQPKAVCTHCKHSPPCPQPGCVTKRPPVPPRLYLPPPVPIRQPNTKDIDNVEFKYLTRYEQHVIRMLRLCNMYQNLEK</sequence>
<keyword id="KW-1035">Host cytoplasm</keyword>
<keyword id="KW-0945">Host-virus interaction</keyword>
<keyword id="KW-1119">Modulation of host cell apoptosis by virus</keyword>
<keyword id="KW-1185">Reference proteome</keyword>
<dbReference type="EMBL" id="AF162273">
    <property type="status" value="NOT_ANNOTATED_CDS"/>
    <property type="molecule type" value="Genomic_DNA"/>
</dbReference>
<dbReference type="Proteomes" id="UP000006624">
    <property type="component" value="Segment"/>
</dbReference>
<dbReference type="GO" id="GO:0030430">
    <property type="term" value="C:host cell cytoplasm"/>
    <property type="evidence" value="ECO:0000314"/>
    <property type="project" value="UniProtKB"/>
</dbReference>
<dbReference type="GO" id="GO:0052150">
    <property type="term" value="P:symbiont-mediated perturbation of host apoptosis"/>
    <property type="evidence" value="ECO:0007669"/>
    <property type="project" value="UniProtKB-KW"/>
</dbReference>
<accession>P0DJZ0</accession>
<proteinExistence type="evidence at protein level"/>